<evidence type="ECO:0000250" key="1"/>
<evidence type="ECO:0000255" key="2"/>
<evidence type="ECO:0000305" key="3"/>
<gene>
    <name type="ordered locus">At4g37235</name>
    <name type="ORF">AP22.102</name>
</gene>
<organism>
    <name type="scientific">Arabidopsis thaliana</name>
    <name type="common">Mouse-ear cress</name>
    <dbReference type="NCBI Taxonomy" id="3702"/>
    <lineage>
        <taxon>Eukaryota</taxon>
        <taxon>Viridiplantae</taxon>
        <taxon>Streptophyta</taxon>
        <taxon>Embryophyta</taxon>
        <taxon>Tracheophyta</taxon>
        <taxon>Spermatophyta</taxon>
        <taxon>Magnoliopsida</taxon>
        <taxon>eudicotyledons</taxon>
        <taxon>Gunneridae</taxon>
        <taxon>Pentapetalae</taxon>
        <taxon>rosids</taxon>
        <taxon>malvids</taxon>
        <taxon>Brassicales</taxon>
        <taxon>Brassicaceae</taxon>
        <taxon>Camelineae</taxon>
        <taxon>Arabidopsis</taxon>
    </lineage>
</organism>
<dbReference type="EMBL" id="Z99707">
    <property type="status" value="NOT_ANNOTATED_CDS"/>
    <property type="molecule type" value="Genomic_DNA"/>
</dbReference>
<dbReference type="EMBL" id="CP002687">
    <property type="protein sequence ID" value="AEE86771.1"/>
    <property type="molecule type" value="Genomic_DNA"/>
</dbReference>
<dbReference type="EMBL" id="BT015421">
    <property type="protein sequence ID" value="AAU06130.1"/>
    <property type="molecule type" value="mRNA"/>
</dbReference>
<dbReference type="RefSeq" id="NP_974700.1">
    <property type="nucleotide sequence ID" value="NM_202971.2"/>
</dbReference>
<dbReference type="STRING" id="3702.Q66GI1"/>
<dbReference type="PaxDb" id="3702-AT4G37235.1"/>
<dbReference type="EnsemblPlants" id="AT4G37235.1">
    <property type="protein sequence ID" value="AT4G37235.1"/>
    <property type="gene ID" value="AT4G37235"/>
</dbReference>
<dbReference type="GeneID" id="2745737"/>
<dbReference type="Gramene" id="AT4G37235.1">
    <property type="protein sequence ID" value="AT4G37235.1"/>
    <property type="gene ID" value="AT4G37235"/>
</dbReference>
<dbReference type="KEGG" id="ath:AT4G37235"/>
<dbReference type="Araport" id="AT4G37235"/>
<dbReference type="TAIR" id="AT4G37235">
    <property type="gene designation" value="CASPL5C1"/>
</dbReference>
<dbReference type="eggNOG" id="ENOG502RZFM">
    <property type="taxonomic scope" value="Eukaryota"/>
</dbReference>
<dbReference type="HOGENOM" id="CLU_103961_1_0_1"/>
<dbReference type="InParanoid" id="Q66GI1"/>
<dbReference type="OMA" id="QRRLVMI"/>
<dbReference type="PhylomeDB" id="Q66GI1"/>
<dbReference type="PRO" id="PR:Q66GI1"/>
<dbReference type="Proteomes" id="UP000006548">
    <property type="component" value="Chromosome 4"/>
</dbReference>
<dbReference type="ExpressionAtlas" id="Q66GI1">
    <property type="expression patterns" value="baseline and differential"/>
</dbReference>
<dbReference type="GO" id="GO:0005886">
    <property type="term" value="C:plasma membrane"/>
    <property type="evidence" value="ECO:0007669"/>
    <property type="project" value="UniProtKB-SubCell"/>
</dbReference>
<dbReference type="InterPro" id="IPR006702">
    <property type="entry name" value="CASP_dom"/>
</dbReference>
<dbReference type="InterPro" id="IPR045009">
    <property type="entry name" value="CASPL-5"/>
</dbReference>
<dbReference type="PANTHER" id="PTHR32021">
    <property type="entry name" value="CASP-LIKE PROTEIN 5B3"/>
    <property type="match status" value="1"/>
</dbReference>
<dbReference type="PANTHER" id="PTHR32021:SF30">
    <property type="entry name" value="CASP-LIKE PROTEIN 5C1"/>
    <property type="match status" value="1"/>
</dbReference>
<dbReference type="Pfam" id="PF04535">
    <property type="entry name" value="CASP_dom"/>
    <property type="match status" value="1"/>
</dbReference>
<comment type="subunit">
    <text evidence="1">Homodimer and heterodimers.</text>
</comment>
<comment type="subcellular location">
    <subcellularLocation>
        <location evidence="1">Cell membrane</location>
        <topology evidence="1">Multi-pass membrane protein</topology>
    </subcellularLocation>
</comment>
<comment type="similarity">
    <text evidence="3">Belongs to the Casparian strip membrane proteins (CASP) family.</text>
</comment>
<name>CSPLT_ARATH</name>
<proteinExistence type="evidence at transcript level"/>
<sequence length="152" mass="16548">MVRTTASFGTSSSFVLRLGQTLFSSASLLFMCFNDDEDFYAYTTFCYLVTVMGLVTPWSVTLALMEAYSILVKKLPMQATVISVIVAGDFVLSFLSLGGACSTASVAVLLMDAGEKQCDRYKLSATMAFLSSFLSFASTFFNFCLLPSLMSH</sequence>
<keyword id="KW-1003">Cell membrane</keyword>
<keyword id="KW-0472">Membrane</keyword>
<keyword id="KW-1185">Reference proteome</keyword>
<keyword id="KW-0812">Transmembrane</keyword>
<keyword id="KW-1133">Transmembrane helix</keyword>
<reference key="1">
    <citation type="journal article" date="1998" name="Nature">
        <title>Analysis of 1.9 Mb of contiguous sequence from chromosome 4 of Arabidopsis thaliana.</title>
        <authorList>
            <person name="Bevan M."/>
            <person name="Bancroft I."/>
            <person name="Bent E."/>
            <person name="Love K."/>
            <person name="Goodman H.M."/>
            <person name="Dean C."/>
            <person name="Bergkamp R."/>
            <person name="Dirkse W."/>
            <person name="van Staveren M."/>
            <person name="Stiekema W."/>
            <person name="Drost L."/>
            <person name="Ridley P."/>
            <person name="Hudson S.-A."/>
            <person name="Patel K."/>
            <person name="Murphy G."/>
            <person name="Piffanelli P."/>
            <person name="Wedler H."/>
            <person name="Wedler E."/>
            <person name="Wambutt R."/>
            <person name="Weitzenegger T."/>
            <person name="Pohl T."/>
            <person name="Terryn N."/>
            <person name="Gielen J."/>
            <person name="Villarroel R."/>
            <person name="De Clercq R."/>
            <person name="van Montagu M."/>
            <person name="Lecharny A."/>
            <person name="Aubourg S."/>
            <person name="Gy I."/>
            <person name="Kreis M."/>
            <person name="Lao N."/>
            <person name="Kavanagh T."/>
            <person name="Hempel S."/>
            <person name="Kotter P."/>
            <person name="Entian K.-D."/>
            <person name="Rieger M."/>
            <person name="Schaefer M."/>
            <person name="Funk B."/>
            <person name="Mueller-Auer S."/>
            <person name="Silvey M."/>
            <person name="James R."/>
            <person name="Monfort A."/>
            <person name="Pons A."/>
            <person name="Puigdomenech P."/>
            <person name="Douka A."/>
            <person name="Voukelatou E."/>
            <person name="Milioni D."/>
            <person name="Hatzopoulos P."/>
            <person name="Piravandi E."/>
            <person name="Obermaier B."/>
            <person name="Hilbert H."/>
            <person name="Duesterhoeft A."/>
            <person name="Moores T."/>
            <person name="Jones J.D.G."/>
            <person name="Eneva T."/>
            <person name="Palme K."/>
            <person name="Benes V."/>
            <person name="Rechmann S."/>
            <person name="Ansorge W."/>
            <person name="Cooke R."/>
            <person name="Berger C."/>
            <person name="Delseny M."/>
            <person name="Voet M."/>
            <person name="Volckaert G."/>
            <person name="Mewes H.-W."/>
            <person name="Klosterman S."/>
            <person name="Schueller C."/>
            <person name="Chalwatzis N."/>
        </authorList>
    </citation>
    <scope>NUCLEOTIDE SEQUENCE [LARGE SCALE GENOMIC DNA]</scope>
    <source>
        <strain>cv. Columbia</strain>
    </source>
</reference>
<reference key="2">
    <citation type="journal article" date="2017" name="Plant J.">
        <title>Araport11: a complete reannotation of the Arabidopsis thaliana reference genome.</title>
        <authorList>
            <person name="Cheng C.Y."/>
            <person name="Krishnakumar V."/>
            <person name="Chan A.P."/>
            <person name="Thibaud-Nissen F."/>
            <person name="Schobel S."/>
            <person name="Town C.D."/>
        </authorList>
    </citation>
    <scope>GENOME REANNOTATION</scope>
    <source>
        <strain>cv. Columbia</strain>
    </source>
</reference>
<reference key="3">
    <citation type="submission" date="2004-08" db="EMBL/GenBank/DDBJ databases">
        <title>Arabidopsis ORF clones.</title>
        <authorList>
            <person name="Cheuk R.F."/>
            <person name="Chen H."/>
            <person name="Kim C.J."/>
            <person name="Shinn P."/>
            <person name="Ecker J.R."/>
        </authorList>
    </citation>
    <scope>NUCLEOTIDE SEQUENCE [LARGE SCALE MRNA]</scope>
    <source>
        <strain>cv. Columbia</strain>
    </source>
</reference>
<reference key="4">
    <citation type="journal article" date="2014" name="Plant Physiol.">
        <title>Functional and evolutionary analysis of the CASPARIAN STRIP MEMBRANE DOMAIN PROTEIN family.</title>
        <authorList>
            <person name="Roppolo D."/>
            <person name="Boeckmann B."/>
            <person name="Pfister A."/>
            <person name="Boutet E."/>
            <person name="Rubio M.C."/>
            <person name="Denervaud-Tendon V."/>
            <person name="Vermeer J.E."/>
            <person name="Gheyselinck J."/>
            <person name="Xenarios I."/>
            <person name="Geldner N."/>
        </authorList>
    </citation>
    <scope>GENE FAMILY</scope>
    <scope>NOMENCLATURE</scope>
</reference>
<protein>
    <recommendedName>
        <fullName>CASP-like protein 5C1</fullName>
        <shortName>AtCASPL5C1</shortName>
    </recommendedName>
</protein>
<feature type="chain" id="PRO_0000308682" description="CASP-like protein 5C1">
    <location>
        <begin position="1"/>
        <end position="152"/>
    </location>
</feature>
<feature type="topological domain" description="Cytoplasmic" evidence="2">
    <location>
        <begin position="1"/>
        <end position="12"/>
    </location>
</feature>
<feature type="transmembrane region" description="Helical" evidence="2">
    <location>
        <begin position="13"/>
        <end position="33"/>
    </location>
</feature>
<feature type="topological domain" description="Extracellular" evidence="2">
    <location>
        <begin position="34"/>
        <end position="44"/>
    </location>
</feature>
<feature type="transmembrane region" description="Helical" evidence="2">
    <location>
        <begin position="45"/>
        <end position="65"/>
    </location>
</feature>
<feature type="topological domain" description="Cytoplasmic" evidence="2">
    <location>
        <begin position="66"/>
        <end position="80"/>
    </location>
</feature>
<feature type="transmembrane region" description="Helical" evidence="2">
    <location>
        <begin position="81"/>
        <end position="101"/>
    </location>
</feature>
<feature type="topological domain" description="Extracellular" evidence="2">
    <location>
        <begin position="102"/>
        <end position="126"/>
    </location>
</feature>
<feature type="transmembrane region" description="Helical" evidence="2">
    <location>
        <begin position="127"/>
        <end position="147"/>
    </location>
</feature>
<feature type="topological domain" description="Cytoplasmic" evidence="2">
    <location>
        <begin position="148"/>
        <end position="152"/>
    </location>
</feature>
<accession>Q66GI1</accession>